<sequence>MSTEPEVNLKLAQEHGLNEEEYAKICEILGRTPSFTELGIYSVMWSEHCSYKNSIAVLKTLPRDGASLLTQAGEENAGLVDIGDNLAVAFKIESHNHPSAVEPYQGAATGVGGIHRDIFTMGARPVASLDSLRFGSPRDPRVRYLVDGVVRGIGDYGNSFGVPTVGGEIYFEDCYTGNPLVNVMSVGLVEHHKTVSATAWGKGNPVLIVGSSTGRDGIHGATFASEDLSEASEDKRPSVQVGDPFAEKLLLEATLEAIATGAVVGLQDMGAAGLTSSTSEMSARGIEKTGSGGIEIDLDLTPAREKGMTAYELMLSESQERMLIVAEKGREHEIIDVYKKWDVSAVVIGQVTDDNMLRVRHHGEVVAEIPATSLVLGGGAPVYIREAVEKKPDTPAADLVADDSLDFKALSLQLLSRPNIASKAWVYQQYDSMVQTNTVTPAGQTDAAVIRIKGTKKGLAMKTDCNSRYVYLNPKAGGAIAVAECARNIACTGAKPLAVTNCLNFGNPYKPEVYFQFKSAVEGIGDACRMFDTPITGGNVSFYNETSLGGGRTAIYPTPTIGMIGLLDNIDNLVESTFRKAGDAIVLLGAPELSLDGSEYLVMQYGTPGTDSPAVDLNHEKNLQELLVTLASKKLINSAHDVSDGGLAVTLAEKSIMNRERMLGFEVDLECSCKEGTAIQKQLFSEAQGRVVISVDPGRVGAVIEEADRLNIPGRVIGKVTPEGASIAVNGKPVAEFMIDELLHAYGHALESALHLEEL</sequence>
<proteinExistence type="inferred from homology"/>
<reference key="1">
    <citation type="journal article" date="2002" name="Proc. Natl. Acad. Sci. U.S.A.">
        <title>The complete genome sequence of Chlorobium tepidum TLS, a photosynthetic, anaerobic, green-sulfur bacterium.</title>
        <authorList>
            <person name="Eisen J.A."/>
            <person name="Nelson K.E."/>
            <person name="Paulsen I.T."/>
            <person name="Heidelberg J.F."/>
            <person name="Wu M."/>
            <person name="Dodson R.J."/>
            <person name="DeBoy R.T."/>
            <person name="Gwinn M.L."/>
            <person name="Nelson W.C."/>
            <person name="Haft D.H."/>
            <person name="Hickey E.K."/>
            <person name="Peterson J.D."/>
            <person name="Durkin A.S."/>
            <person name="Kolonay J.F."/>
            <person name="Yang F."/>
            <person name="Holt I.E."/>
            <person name="Umayam L.A."/>
            <person name="Mason T.M."/>
            <person name="Brenner M."/>
            <person name="Shea T.P."/>
            <person name="Parksey D.S."/>
            <person name="Nierman W.C."/>
            <person name="Feldblyum T.V."/>
            <person name="Hansen C.L."/>
            <person name="Craven M.B."/>
            <person name="Radune D."/>
            <person name="Vamathevan J.J."/>
            <person name="Khouri H.M."/>
            <person name="White O."/>
            <person name="Gruber T.M."/>
            <person name="Ketchum K.A."/>
            <person name="Venter J.C."/>
            <person name="Tettelin H."/>
            <person name="Bryant D.A."/>
            <person name="Fraser C.M."/>
        </authorList>
    </citation>
    <scope>NUCLEOTIDE SEQUENCE [LARGE SCALE GENOMIC DNA]</scope>
    <source>
        <strain>ATCC 49652 / DSM 12025 / NBRC 103806 / TLS</strain>
    </source>
</reference>
<feature type="chain" id="PRO_0000100449" description="Phosphoribosylformylglycinamidine synthase subunit PurL">
    <location>
        <begin position="1"/>
        <end position="759"/>
    </location>
</feature>
<feature type="active site" evidence="1">
    <location>
        <position position="48"/>
    </location>
</feature>
<feature type="active site" description="Proton acceptor" evidence="1">
    <location>
        <position position="95"/>
    </location>
</feature>
<feature type="binding site" evidence="1">
    <location>
        <position position="51"/>
    </location>
    <ligand>
        <name>ATP</name>
        <dbReference type="ChEBI" id="CHEBI:30616"/>
    </ligand>
</feature>
<feature type="binding site" evidence="1">
    <location>
        <position position="91"/>
    </location>
    <ligand>
        <name>ATP</name>
        <dbReference type="ChEBI" id="CHEBI:30616"/>
    </ligand>
</feature>
<feature type="binding site" evidence="1">
    <location>
        <position position="93"/>
    </location>
    <ligand>
        <name>Mg(2+)</name>
        <dbReference type="ChEBI" id="CHEBI:18420"/>
        <label>1</label>
    </ligand>
</feature>
<feature type="binding site" evidence="1">
    <location>
        <begin position="94"/>
        <end position="97"/>
    </location>
    <ligand>
        <name>substrate</name>
    </ligand>
</feature>
<feature type="binding site" evidence="1">
    <location>
        <position position="116"/>
    </location>
    <ligand>
        <name>substrate</name>
    </ligand>
</feature>
<feature type="binding site" evidence="1">
    <location>
        <position position="117"/>
    </location>
    <ligand>
        <name>Mg(2+)</name>
        <dbReference type="ChEBI" id="CHEBI:18420"/>
        <label>2</label>
    </ligand>
</feature>
<feature type="binding site" evidence="1">
    <location>
        <position position="240"/>
    </location>
    <ligand>
        <name>substrate</name>
    </ligand>
</feature>
<feature type="binding site" evidence="1">
    <location>
        <position position="268"/>
    </location>
    <ligand>
        <name>Mg(2+)</name>
        <dbReference type="ChEBI" id="CHEBI:18420"/>
        <label>2</label>
    </ligand>
</feature>
<feature type="binding site" evidence="1">
    <location>
        <begin position="317"/>
        <end position="319"/>
    </location>
    <ligand>
        <name>substrate</name>
    </ligand>
</feature>
<feature type="binding site" evidence="1">
    <location>
        <position position="501"/>
    </location>
    <ligand>
        <name>ATP</name>
        <dbReference type="ChEBI" id="CHEBI:30616"/>
    </ligand>
</feature>
<feature type="binding site" evidence="1">
    <location>
        <position position="538"/>
    </location>
    <ligand>
        <name>ATP</name>
        <dbReference type="ChEBI" id="CHEBI:30616"/>
    </ligand>
</feature>
<feature type="binding site" evidence="1">
    <location>
        <position position="539"/>
    </location>
    <ligand>
        <name>Mg(2+)</name>
        <dbReference type="ChEBI" id="CHEBI:18420"/>
        <label>1</label>
    </ligand>
</feature>
<feature type="binding site" evidence="1">
    <location>
        <position position="541"/>
    </location>
    <ligand>
        <name>substrate</name>
    </ligand>
</feature>
<dbReference type="EC" id="6.3.5.3" evidence="1"/>
<dbReference type="EMBL" id="AE006470">
    <property type="protein sequence ID" value="AAM72470.1"/>
    <property type="molecule type" value="Genomic_DNA"/>
</dbReference>
<dbReference type="RefSeq" id="NP_662128.1">
    <property type="nucleotide sequence ID" value="NC_002932.3"/>
</dbReference>
<dbReference type="RefSeq" id="WP_010932909.1">
    <property type="nucleotide sequence ID" value="NC_002932.3"/>
</dbReference>
<dbReference type="SMR" id="Q8KD17"/>
<dbReference type="STRING" id="194439.CT1240"/>
<dbReference type="EnsemblBacteria" id="AAM72470">
    <property type="protein sequence ID" value="AAM72470"/>
    <property type="gene ID" value="CT1240"/>
</dbReference>
<dbReference type="KEGG" id="cte:CT1240"/>
<dbReference type="PATRIC" id="fig|194439.7.peg.1131"/>
<dbReference type="eggNOG" id="COG0046">
    <property type="taxonomic scope" value="Bacteria"/>
</dbReference>
<dbReference type="HOGENOM" id="CLU_003100_0_1_10"/>
<dbReference type="OrthoDB" id="9804441at2"/>
<dbReference type="UniPathway" id="UPA00074">
    <property type="reaction ID" value="UER00128"/>
</dbReference>
<dbReference type="Proteomes" id="UP000001007">
    <property type="component" value="Chromosome"/>
</dbReference>
<dbReference type="GO" id="GO:0005737">
    <property type="term" value="C:cytoplasm"/>
    <property type="evidence" value="ECO:0007669"/>
    <property type="project" value="UniProtKB-SubCell"/>
</dbReference>
<dbReference type="GO" id="GO:0005524">
    <property type="term" value="F:ATP binding"/>
    <property type="evidence" value="ECO:0007669"/>
    <property type="project" value="UniProtKB-UniRule"/>
</dbReference>
<dbReference type="GO" id="GO:0000287">
    <property type="term" value="F:magnesium ion binding"/>
    <property type="evidence" value="ECO:0007669"/>
    <property type="project" value="UniProtKB-UniRule"/>
</dbReference>
<dbReference type="GO" id="GO:0004642">
    <property type="term" value="F:phosphoribosylformylglycinamidine synthase activity"/>
    <property type="evidence" value="ECO:0007669"/>
    <property type="project" value="UniProtKB-UniRule"/>
</dbReference>
<dbReference type="GO" id="GO:0006189">
    <property type="term" value="P:'de novo' IMP biosynthetic process"/>
    <property type="evidence" value="ECO:0007669"/>
    <property type="project" value="UniProtKB-UniRule"/>
</dbReference>
<dbReference type="CDD" id="cd02203">
    <property type="entry name" value="PurL_repeat1"/>
    <property type="match status" value="1"/>
</dbReference>
<dbReference type="CDD" id="cd02204">
    <property type="entry name" value="PurL_repeat2"/>
    <property type="match status" value="1"/>
</dbReference>
<dbReference type="FunFam" id="3.30.1330.10:FF:000004">
    <property type="entry name" value="Phosphoribosylformylglycinamidine synthase subunit PurL"/>
    <property type="match status" value="1"/>
</dbReference>
<dbReference type="Gene3D" id="3.90.650.10">
    <property type="entry name" value="PurM-like C-terminal domain"/>
    <property type="match status" value="2"/>
</dbReference>
<dbReference type="Gene3D" id="3.30.1330.10">
    <property type="entry name" value="PurM-like, N-terminal domain"/>
    <property type="match status" value="2"/>
</dbReference>
<dbReference type="HAMAP" id="MF_00420">
    <property type="entry name" value="PurL_2"/>
    <property type="match status" value="1"/>
</dbReference>
<dbReference type="InterPro" id="IPR010074">
    <property type="entry name" value="PRibForGlyAmidine_synth_PurL"/>
</dbReference>
<dbReference type="InterPro" id="IPR041609">
    <property type="entry name" value="PurL_linker"/>
</dbReference>
<dbReference type="InterPro" id="IPR010918">
    <property type="entry name" value="PurM-like_C_dom"/>
</dbReference>
<dbReference type="InterPro" id="IPR036676">
    <property type="entry name" value="PurM-like_C_sf"/>
</dbReference>
<dbReference type="InterPro" id="IPR016188">
    <property type="entry name" value="PurM-like_N"/>
</dbReference>
<dbReference type="InterPro" id="IPR036921">
    <property type="entry name" value="PurM-like_N_sf"/>
</dbReference>
<dbReference type="NCBIfam" id="TIGR01736">
    <property type="entry name" value="FGAM_synth_II"/>
    <property type="match status" value="1"/>
</dbReference>
<dbReference type="NCBIfam" id="NF002290">
    <property type="entry name" value="PRK01213.1"/>
    <property type="match status" value="1"/>
</dbReference>
<dbReference type="PANTHER" id="PTHR43555">
    <property type="entry name" value="PHOSPHORIBOSYLFORMYLGLYCINAMIDINE SYNTHASE SUBUNIT PURL"/>
    <property type="match status" value="1"/>
</dbReference>
<dbReference type="PANTHER" id="PTHR43555:SF1">
    <property type="entry name" value="PHOSPHORIBOSYLFORMYLGLYCINAMIDINE SYNTHASE SUBUNIT PURL"/>
    <property type="match status" value="1"/>
</dbReference>
<dbReference type="Pfam" id="PF00586">
    <property type="entry name" value="AIRS"/>
    <property type="match status" value="2"/>
</dbReference>
<dbReference type="Pfam" id="PF02769">
    <property type="entry name" value="AIRS_C"/>
    <property type="match status" value="2"/>
</dbReference>
<dbReference type="Pfam" id="PF18072">
    <property type="entry name" value="FGAR-AT_linker"/>
    <property type="match status" value="1"/>
</dbReference>
<dbReference type="PIRSF" id="PIRSF001587">
    <property type="entry name" value="FGAM_synthase_II"/>
    <property type="match status" value="1"/>
</dbReference>
<dbReference type="SUPFAM" id="SSF56042">
    <property type="entry name" value="PurM C-terminal domain-like"/>
    <property type="match status" value="2"/>
</dbReference>
<dbReference type="SUPFAM" id="SSF55326">
    <property type="entry name" value="PurM N-terminal domain-like"/>
    <property type="match status" value="2"/>
</dbReference>
<keyword id="KW-0067">ATP-binding</keyword>
<keyword id="KW-0963">Cytoplasm</keyword>
<keyword id="KW-0436">Ligase</keyword>
<keyword id="KW-0460">Magnesium</keyword>
<keyword id="KW-0479">Metal-binding</keyword>
<keyword id="KW-0547">Nucleotide-binding</keyword>
<keyword id="KW-0658">Purine biosynthesis</keyword>
<keyword id="KW-1185">Reference proteome</keyword>
<evidence type="ECO:0000255" key="1">
    <source>
        <dbReference type="HAMAP-Rule" id="MF_00420"/>
    </source>
</evidence>
<name>PURL_CHLTE</name>
<protein>
    <recommendedName>
        <fullName evidence="1">Phosphoribosylformylglycinamidine synthase subunit PurL</fullName>
        <shortName evidence="1">FGAM synthase</shortName>
        <ecNumber evidence="1">6.3.5.3</ecNumber>
    </recommendedName>
    <alternativeName>
        <fullName evidence="1">Formylglycinamide ribonucleotide amidotransferase subunit II</fullName>
        <shortName evidence="1">FGAR amidotransferase II</shortName>
        <shortName evidence="1">FGAR-AT II</shortName>
    </alternativeName>
    <alternativeName>
        <fullName evidence="1">Glutamine amidotransferase PurL</fullName>
    </alternativeName>
    <alternativeName>
        <fullName evidence="1">Phosphoribosylformylglycinamidine synthase subunit II</fullName>
    </alternativeName>
</protein>
<gene>
    <name evidence="1" type="primary">purL</name>
    <name type="ordered locus">CT1240</name>
</gene>
<organism>
    <name type="scientific">Chlorobaculum tepidum (strain ATCC 49652 / DSM 12025 / NBRC 103806 / TLS)</name>
    <name type="common">Chlorobium tepidum</name>
    <dbReference type="NCBI Taxonomy" id="194439"/>
    <lineage>
        <taxon>Bacteria</taxon>
        <taxon>Pseudomonadati</taxon>
        <taxon>Chlorobiota</taxon>
        <taxon>Chlorobiia</taxon>
        <taxon>Chlorobiales</taxon>
        <taxon>Chlorobiaceae</taxon>
        <taxon>Chlorobaculum</taxon>
    </lineage>
</organism>
<accession>Q8KD17</accession>
<comment type="function">
    <text evidence="1">Part of the phosphoribosylformylglycinamidine synthase complex involved in the purines biosynthetic pathway. Catalyzes the ATP-dependent conversion of formylglycinamide ribonucleotide (FGAR) and glutamine to yield formylglycinamidine ribonucleotide (FGAM) and glutamate. The FGAM synthase complex is composed of three subunits. PurQ produces an ammonia molecule by converting glutamine to glutamate. PurL transfers the ammonia molecule to FGAR to form FGAM in an ATP-dependent manner. PurS interacts with PurQ and PurL and is thought to assist in the transfer of the ammonia molecule from PurQ to PurL.</text>
</comment>
<comment type="catalytic activity">
    <reaction evidence="1">
        <text>N(2)-formyl-N(1)-(5-phospho-beta-D-ribosyl)glycinamide + L-glutamine + ATP + H2O = 2-formamido-N(1)-(5-O-phospho-beta-D-ribosyl)acetamidine + L-glutamate + ADP + phosphate + H(+)</text>
        <dbReference type="Rhea" id="RHEA:17129"/>
        <dbReference type="ChEBI" id="CHEBI:15377"/>
        <dbReference type="ChEBI" id="CHEBI:15378"/>
        <dbReference type="ChEBI" id="CHEBI:29985"/>
        <dbReference type="ChEBI" id="CHEBI:30616"/>
        <dbReference type="ChEBI" id="CHEBI:43474"/>
        <dbReference type="ChEBI" id="CHEBI:58359"/>
        <dbReference type="ChEBI" id="CHEBI:147286"/>
        <dbReference type="ChEBI" id="CHEBI:147287"/>
        <dbReference type="ChEBI" id="CHEBI:456216"/>
        <dbReference type="EC" id="6.3.5.3"/>
    </reaction>
</comment>
<comment type="pathway">
    <text evidence="1">Purine metabolism; IMP biosynthesis via de novo pathway; 5-amino-1-(5-phospho-D-ribosyl)imidazole from N(2)-formyl-N(1)-(5-phospho-D-ribosyl)glycinamide: step 1/2.</text>
</comment>
<comment type="subunit">
    <text evidence="1">Monomer. Part of the FGAM synthase complex composed of 1 PurL, 1 PurQ and 2 PurS subunits.</text>
</comment>
<comment type="subcellular location">
    <subcellularLocation>
        <location evidence="1">Cytoplasm</location>
    </subcellularLocation>
</comment>
<comment type="similarity">
    <text evidence="1">Belongs to the FGAMS family.</text>
</comment>